<sequence>MAAPALSGDQIRETFLKFFEGKGHRRLPSASLIPEDPTVLLTIAGMLPFKPIFLGQQVAEVPRATTSQKCIRTNDIENVGRTARHHTFFEMLGNFSFGDYFKKEAIAFAWELVTEVFQVPAERLAVSVFEEDDEAFAIWRDQIGVPEARIQRLGAKDNFWASGPTGPCGPCSEIYYDFHPELGNDGLDLEDDSRFIEVYNLVFMQYNRDAAGNLTALEKQNIDTGMGLERMAQVLQGVPNNYETDLIFPIIQAVAAIAQRDYASESESVKVSLKVIGDHLRAVTHLIADGVTASNLGRGYVLRRLIRRVVRHGRLIGIDRPFTAEIAETAIALMAAQYPNLREREAAIKAELTREEQRFLETLERGEKLLAELLAAATDQIRGEDAFVLYDTYGFPLELTQEIAEEKGLTVDLAGFEAAMAAQRQRSQAAHETIDLTVQGSLDRLAEQIHPSEFVGYGDAVATAKVTALLREGQSVEAAEAGDRVQIVLDHTPFYAESGGQVGDRGVLTGESLIVRIEDVQKESGFFVHYGQIERGLLQVGDSVTAQIDRACRRRAQANHTATHLLQAALKLIVDEGISQAGSLVAFDRLRFDFNCPRAVTPEELRQIEDQINQWIAEAHGTVVEVMPIATAKAKGAVAMFGEKYGAEVRVIDVPGVSMELCGGTHVANTAEIGLFKIISEAGVASGVRRIEAVAGPAVLEYLNVRDAVVRDLSDRFKAKPEELSDRVTALQEELKANQKQLTALKAELAIAKSDALVSQAIPVGDAQVLVETLTGVDAAALQTAAERLQQKLGDAGAVVLGSSPEEGKVTLVAAFGPAIIAKGLKAGQFIGGIAKICGGGGGGRPNLAQAGGRDASKLPEAIAAALDQLKTAIAS</sequence>
<evidence type="ECO:0000255" key="1">
    <source>
        <dbReference type="HAMAP-Rule" id="MF_00036"/>
    </source>
</evidence>
<evidence type="ECO:0000305" key="2"/>
<feature type="chain" id="PRO_0000075227" description="Alanine--tRNA ligase">
    <location>
        <begin position="1"/>
        <end position="876"/>
    </location>
</feature>
<feature type="binding site" evidence="1">
    <location>
        <position position="560"/>
    </location>
    <ligand>
        <name>Zn(2+)</name>
        <dbReference type="ChEBI" id="CHEBI:29105"/>
    </ligand>
</feature>
<feature type="binding site" evidence="1">
    <location>
        <position position="564"/>
    </location>
    <ligand>
        <name>Zn(2+)</name>
        <dbReference type="ChEBI" id="CHEBI:29105"/>
    </ligand>
</feature>
<feature type="binding site" evidence="1">
    <location>
        <position position="662"/>
    </location>
    <ligand>
        <name>Zn(2+)</name>
        <dbReference type="ChEBI" id="CHEBI:29105"/>
    </ligand>
</feature>
<feature type="binding site" evidence="1">
    <location>
        <position position="666"/>
    </location>
    <ligand>
        <name>Zn(2+)</name>
        <dbReference type="ChEBI" id="CHEBI:29105"/>
    </ligand>
</feature>
<dbReference type="EC" id="6.1.1.7" evidence="1"/>
<dbReference type="EMBL" id="AP008231">
    <property type="protein sequence ID" value="BAD78854.1"/>
    <property type="status" value="ALT_INIT"/>
    <property type="molecule type" value="Genomic_DNA"/>
</dbReference>
<dbReference type="RefSeq" id="WP_041676939.1">
    <property type="nucleotide sequence ID" value="NC_006576.1"/>
</dbReference>
<dbReference type="SMR" id="Q5N4B5"/>
<dbReference type="KEGG" id="syc:syc0664_c"/>
<dbReference type="eggNOG" id="COG0013">
    <property type="taxonomic scope" value="Bacteria"/>
</dbReference>
<dbReference type="Proteomes" id="UP000001175">
    <property type="component" value="Chromosome"/>
</dbReference>
<dbReference type="GO" id="GO:0005829">
    <property type="term" value="C:cytosol"/>
    <property type="evidence" value="ECO:0007669"/>
    <property type="project" value="TreeGrafter"/>
</dbReference>
<dbReference type="GO" id="GO:0004813">
    <property type="term" value="F:alanine-tRNA ligase activity"/>
    <property type="evidence" value="ECO:0007669"/>
    <property type="project" value="UniProtKB-UniRule"/>
</dbReference>
<dbReference type="GO" id="GO:0002161">
    <property type="term" value="F:aminoacyl-tRNA deacylase activity"/>
    <property type="evidence" value="ECO:0007669"/>
    <property type="project" value="TreeGrafter"/>
</dbReference>
<dbReference type="GO" id="GO:0005524">
    <property type="term" value="F:ATP binding"/>
    <property type="evidence" value="ECO:0007669"/>
    <property type="project" value="UniProtKB-UniRule"/>
</dbReference>
<dbReference type="GO" id="GO:0000049">
    <property type="term" value="F:tRNA binding"/>
    <property type="evidence" value="ECO:0007669"/>
    <property type="project" value="UniProtKB-KW"/>
</dbReference>
<dbReference type="GO" id="GO:0008270">
    <property type="term" value="F:zinc ion binding"/>
    <property type="evidence" value="ECO:0007669"/>
    <property type="project" value="UniProtKB-UniRule"/>
</dbReference>
<dbReference type="GO" id="GO:0006419">
    <property type="term" value="P:alanyl-tRNA aminoacylation"/>
    <property type="evidence" value="ECO:0007669"/>
    <property type="project" value="UniProtKB-UniRule"/>
</dbReference>
<dbReference type="CDD" id="cd00673">
    <property type="entry name" value="AlaRS_core"/>
    <property type="match status" value="1"/>
</dbReference>
<dbReference type="FunFam" id="2.40.30.130:FF:000001">
    <property type="entry name" value="Alanine--tRNA ligase"/>
    <property type="match status" value="1"/>
</dbReference>
<dbReference type="FunFam" id="3.10.310.40:FF:000001">
    <property type="entry name" value="Alanine--tRNA ligase"/>
    <property type="match status" value="1"/>
</dbReference>
<dbReference type="FunFam" id="3.30.54.20:FF:000001">
    <property type="entry name" value="Alanine--tRNA ligase"/>
    <property type="match status" value="1"/>
</dbReference>
<dbReference type="FunFam" id="3.30.930.10:FF:000004">
    <property type="entry name" value="Alanine--tRNA ligase"/>
    <property type="match status" value="1"/>
</dbReference>
<dbReference type="FunFam" id="3.30.980.10:FF:000004">
    <property type="entry name" value="Alanine--tRNA ligase, cytoplasmic"/>
    <property type="match status" value="1"/>
</dbReference>
<dbReference type="Gene3D" id="2.40.30.130">
    <property type="match status" value="1"/>
</dbReference>
<dbReference type="Gene3D" id="3.10.310.40">
    <property type="match status" value="1"/>
</dbReference>
<dbReference type="Gene3D" id="3.30.54.20">
    <property type="match status" value="1"/>
</dbReference>
<dbReference type="Gene3D" id="6.10.250.550">
    <property type="match status" value="1"/>
</dbReference>
<dbReference type="Gene3D" id="3.30.930.10">
    <property type="entry name" value="Bira Bifunctional Protein, Domain 2"/>
    <property type="match status" value="1"/>
</dbReference>
<dbReference type="Gene3D" id="3.30.980.10">
    <property type="entry name" value="Threonyl-trna Synthetase, Chain A, domain 2"/>
    <property type="match status" value="1"/>
</dbReference>
<dbReference type="HAMAP" id="MF_00036_B">
    <property type="entry name" value="Ala_tRNA_synth_B"/>
    <property type="match status" value="1"/>
</dbReference>
<dbReference type="InterPro" id="IPR045864">
    <property type="entry name" value="aa-tRNA-synth_II/BPL/LPL"/>
</dbReference>
<dbReference type="InterPro" id="IPR002318">
    <property type="entry name" value="Ala-tRNA-lgiase_IIc"/>
</dbReference>
<dbReference type="InterPro" id="IPR018162">
    <property type="entry name" value="Ala-tRNA-ligase_IIc_anticod-bd"/>
</dbReference>
<dbReference type="InterPro" id="IPR018165">
    <property type="entry name" value="Ala-tRNA-synth_IIc_core"/>
</dbReference>
<dbReference type="InterPro" id="IPR018164">
    <property type="entry name" value="Ala-tRNA-synth_IIc_N"/>
</dbReference>
<dbReference type="InterPro" id="IPR050058">
    <property type="entry name" value="Ala-tRNA_ligase"/>
</dbReference>
<dbReference type="InterPro" id="IPR023033">
    <property type="entry name" value="Ala_tRNA_ligase_euk/bac"/>
</dbReference>
<dbReference type="InterPro" id="IPR003156">
    <property type="entry name" value="DHHA1_dom"/>
</dbReference>
<dbReference type="InterPro" id="IPR018163">
    <property type="entry name" value="Thr/Ala-tRNA-synth_IIc_edit"/>
</dbReference>
<dbReference type="InterPro" id="IPR009000">
    <property type="entry name" value="Transl_B-barrel_sf"/>
</dbReference>
<dbReference type="InterPro" id="IPR012947">
    <property type="entry name" value="tRNA_SAD"/>
</dbReference>
<dbReference type="NCBIfam" id="TIGR00344">
    <property type="entry name" value="alaS"/>
    <property type="match status" value="1"/>
</dbReference>
<dbReference type="PANTHER" id="PTHR11777:SF9">
    <property type="entry name" value="ALANINE--TRNA LIGASE, CYTOPLASMIC"/>
    <property type="match status" value="1"/>
</dbReference>
<dbReference type="PANTHER" id="PTHR11777">
    <property type="entry name" value="ALANYL-TRNA SYNTHETASE"/>
    <property type="match status" value="1"/>
</dbReference>
<dbReference type="Pfam" id="PF02272">
    <property type="entry name" value="DHHA1"/>
    <property type="match status" value="1"/>
</dbReference>
<dbReference type="Pfam" id="PF01411">
    <property type="entry name" value="tRNA-synt_2c"/>
    <property type="match status" value="1"/>
</dbReference>
<dbReference type="Pfam" id="PF07973">
    <property type="entry name" value="tRNA_SAD"/>
    <property type="match status" value="1"/>
</dbReference>
<dbReference type="PRINTS" id="PR00980">
    <property type="entry name" value="TRNASYNTHALA"/>
</dbReference>
<dbReference type="SMART" id="SM00863">
    <property type="entry name" value="tRNA_SAD"/>
    <property type="match status" value="1"/>
</dbReference>
<dbReference type="SUPFAM" id="SSF55681">
    <property type="entry name" value="Class II aaRS and biotin synthetases"/>
    <property type="match status" value="1"/>
</dbReference>
<dbReference type="SUPFAM" id="SSF101353">
    <property type="entry name" value="Putative anticodon-binding domain of alanyl-tRNA synthetase (AlaRS)"/>
    <property type="match status" value="1"/>
</dbReference>
<dbReference type="SUPFAM" id="SSF55186">
    <property type="entry name" value="ThrRS/AlaRS common domain"/>
    <property type="match status" value="1"/>
</dbReference>
<dbReference type="SUPFAM" id="SSF50447">
    <property type="entry name" value="Translation proteins"/>
    <property type="match status" value="1"/>
</dbReference>
<dbReference type="PROSITE" id="PS50860">
    <property type="entry name" value="AA_TRNA_LIGASE_II_ALA"/>
    <property type="match status" value="1"/>
</dbReference>
<proteinExistence type="inferred from homology"/>
<protein>
    <recommendedName>
        <fullName evidence="1">Alanine--tRNA ligase</fullName>
        <ecNumber evidence="1">6.1.1.7</ecNumber>
    </recommendedName>
    <alternativeName>
        <fullName evidence="1">Alanyl-tRNA synthetase</fullName>
        <shortName evidence="1">AlaRS</shortName>
    </alternativeName>
</protein>
<name>SYA_SYNP6</name>
<comment type="function">
    <text evidence="1">Catalyzes the attachment of alanine to tRNA(Ala) in a two-step reaction: alanine is first activated by ATP to form Ala-AMP and then transferred to the acceptor end of tRNA(Ala). Also edits incorrectly charged Ser-tRNA(Ala) and Gly-tRNA(Ala) via its editing domain.</text>
</comment>
<comment type="catalytic activity">
    <reaction evidence="1">
        <text>tRNA(Ala) + L-alanine + ATP = L-alanyl-tRNA(Ala) + AMP + diphosphate</text>
        <dbReference type="Rhea" id="RHEA:12540"/>
        <dbReference type="Rhea" id="RHEA-COMP:9657"/>
        <dbReference type="Rhea" id="RHEA-COMP:9923"/>
        <dbReference type="ChEBI" id="CHEBI:30616"/>
        <dbReference type="ChEBI" id="CHEBI:33019"/>
        <dbReference type="ChEBI" id="CHEBI:57972"/>
        <dbReference type="ChEBI" id="CHEBI:78442"/>
        <dbReference type="ChEBI" id="CHEBI:78497"/>
        <dbReference type="ChEBI" id="CHEBI:456215"/>
        <dbReference type="EC" id="6.1.1.7"/>
    </reaction>
</comment>
<comment type="cofactor">
    <cofactor evidence="1">
        <name>Zn(2+)</name>
        <dbReference type="ChEBI" id="CHEBI:29105"/>
    </cofactor>
    <text evidence="1">Binds 1 zinc ion per subunit.</text>
</comment>
<comment type="subcellular location">
    <subcellularLocation>
        <location evidence="1">Cytoplasm</location>
    </subcellularLocation>
</comment>
<comment type="domain">
    <text evidence="1">Consists of three domains; the N-terminal catalytic domain, the editing domain and the C-terminal C-Ala domain. The editing domain removes incorrectly charged amino acids, while the C-Ala domain, along with tRNA(Ala), serves as a bridge to cooperatively bring together the editing and aminoacylation centers thus stimulating deacylation of misacylated tRNAs.</text>
</comment>
<comment type="similarity">
    <text evidence="1">Belongs to the class-II aminoacyl-tRNA synthetase family.</text>
</comment>
<comment type="sequence caution" evidence="2">
    <conflict type="erroneous initiation">
        <sequence resource="EMBL-CDS" id="BAD78854"/>
    </conflict>
</comment>
<reference key="1">
    <citation type="journal article" date="2007" name="Photosyn. Res.">
        <title>Complete nucleotide sequence of the freshwater unicellular cyanobacterium Synechococcus elongatus PCC 6301 chromosome: gene content and organization.</title>
        <authorList>
            <person name="Sugita C."/>
            <person name="Ogata K."/>
            <person name="Shikata M."/>
            <person name="Jikuya H."/>
            <person name="Takano J."/>
            <person name="Furumichi M."/>
            <person name="Kanehisa M."/>
            <person name="Omata T."/>
            <person name="Sugiura M."/>
            <person name="Sugita M."/>
        </authorList>
    </citation>
    <scope>NUCLEOTIDE SEQUENCE [LARGE SCALE GENOMIC DNA]</scope>
    <source>
        <strain>ATCC 27144 / PCC 6301 / SAUG 1402/1</strain>
    </source>
</reference>
<organism>
    <name type="scientific">Synechococcus sp. (strain ATCC 27144 / PCC 6301 / SAUG 1402/1)</name>
    <name type="common">Anacystis nidulans</name>
    <dbReference type="NCBI Taxonomy" id="269084"/>
    <lineage>
        <taxon>Bacteria</taxon>
        <taxon>Bacillati</taxon>
        <taxon>Cyanobacteriota</taxon>
        <taxon>Cyanophyceae</taxon>
        <taxon>Synechococcales</taxon>
        <taxon>Synechococcaceae</taxon>
        <taxon>Synechococcus</taxon>
    </lineage>
</organism>
<keyword id="KW-0030">Aminoacyl-tRNA synthetase</keyword>
<keyword id="KW-0067">ATP-binding</keyword>
<keyword id="KW-0963">Cytoplasm</keyword>
<keyword id="KW-0436">Ligase</keyword>
<keyword id="KW-0479">Metal-binding</keyword>
<keyword id="KW-0547">Nucleotide-binding</keyword>
<keyword id="KW-0648">Protein biosynthesis</keyword>
<keyword id="KW-0694">RNA-binding</keyword>
<keyword id="KW-0820">tRNA-binding</keyword>
<keyword id="KW-0862">Zinc</keyword>
<accession>Q5N4B5</accession>
<gene>
    <name evidence="1" type="primary">alaS</name>
    <name type="ordered locus">syc0664_c</name>
</gene>